<keyword id="KW-0488">Methylation</keyword>
<keyword id="KW-1185">Reference proteome</keyword>
<keyword id="KW-0687">Ribonucleoprotein</keyword>
<keyword id="KW-0689">Ribosomal protein</keyword>
<keyword id="KW-0694">RNA-binding</keyword>
<keyword id="KW-0699">rRNA-binding</keyword>
<keyword id="KW-0820">tRNA-binding</keyword>
<name>RS12_STRA5</name>
<organism>
    <name type="scientific">Streptococcus agalactiae serotype V (strain ATCC BAA-611 / 2603 V/R)</name>
    <dbReference type="NCBI Taxonomy" id="208435"/>
    <lineage>
        <taxon>Bacteria</taxon>
        <taxon>Bacillati</taxon>
        <taxon>Bacillota</taxon>
        <taxon>Bacilli</taxon>
        <taxon>Lactobacillales</taxon>
        <taxon>Streptococcaceae</taxon>
        <taxon>Streptococcus</taxon>
    </lineage>
</organism>
<dbReference type="EMBL" id="AE009948">
    <property type="protein sequence ID" value="AAN00634.1"/>
    <property type="molecule type" value="Genomic_DNA"/>
</dbReference>
<dbReference type="RefSeq" id="NP_688761.1">
    <property type="nucleotide sequence ID" value="NC_004116.1"/>
</dbReference>
<dbReference type="RefSeq" id="WP_001142328.1">
    <property type="nucleotide sequence ID" value="NC_004116.1"/>
</dbReference>
<dbReference type="SMR" id="Q8DXS5"/>
<dbReference type="STRING" id="208435.SAG1771"/>
<dbReference type="GeneID" id="66886609"/>
<dbReference type="KEGG" id="sag:SAG1771"/>
<dbReference type="PATRIC" id="fig|208435.3.peg.1777"/>
<dbReference type="HOGENOM" id="CLU_104295_1_2_9"/>
<dbReference type="OrthoDB" id="9802366at2"/>
<dbReference type="Proteomes" id="UP000000821">
    <property type="component" value="Chromosome"/>
</dbReference>
<dbReference type="GO" id="GO:0015935">
    <property type="term" value="C:small ribosomal subunit"/>
    <property type="evidence" value="ECO:0007669"/>
    <property type="project" value="InterPro"/>
</dbReference>
<dbReference type="GO" id="GO:0019843">
    <property type="term" value="F:rRNA binding"/>
    <property type="evidence" value="ECO:0007669"/>
    <property type="project" value="UniProtKB-UniRule"/>
</dbReference>
<dbReference type="GO" id="GO:0003735">
    <property type="term" value="F:structural constituent of ribosome"/>
    <property type="evidence" value="ECO:0007669"/>
    <property type="project" value="InterPro"/>
</dbReference>
<dbReference type="GO" id="GO:0000049">
    <property type="term" value="F:tRNA binding"/>
    <property type="evidence" value="ECO:0007669"/>
    <property type="project" value="UniProtKB-UniRule"/>
</dbReference>
<dbReference type="GO" id="GO:0006412">
    <property type="term" value="P:translation"/>
    <property type="evidence" value="ECO:0007669"/>
    <property type="project" value="UniProtKB-UniRule"/>
</dbReference>
<dbReference type="CDD" id="cd03368">
    <property type="entry name" value="Ribosomal_S12"/>
    <property type="match status" value="1"/>
</dbReference>
<dbReference type="FunFam" id="2.40.50.140:FF:000001">
    <property type="entry name" value="30S ribosomal protein S12"/>
    <property type="match status" value="1"/>
</dbReference>
<dbReference type="Gene3D" id="2.40.50.140">
    <property type="entry name" value="Nucleic acid-binding proteins"/>
    <property type="match status" value="1"/>
</dbReference>
<dbReference type="HAMAP" id="MF_00403_B">
    <property type="entry name" value="Ribosomal_uS12_B"/>
    <property type="match status" value="1"/>
</dbReference>
<dbReference type="InterPro" id="IPR012340">
    <property type="entry name" value="NA-bd_OB-fold"/>
</dbReference>
<dbReference type="InterPro" id="IPR006032">
    <property type="entry name" value="Ribosomal_uS12"/>
</dbReference>
<dbReference type="InterPro" id="IPR005679">
    <property type="entry name" value="Ribosomal_uS12_bac"/>
</dbReference>
<dbReference type="NCBIfam" id="TIGR00981">
    <property type="entry name" value="rpsL_bact"/>
    <property type="match status" value="1"/>
</dbReference>
<dbReference type="PANTHER" id="PTHR11652">
    <property type="entry name" value="30S RIBOSOMAL PROTEIN S12 FAMILY MEMBER"/>
    <property type="match status" value="1"/>
</dbReference>
<dbReference type="Pfam" id="PF00164">
    <property type="entry name" value="Ribosom_S12_S23"/>
    <property type="match status" value="1"/>
</dbReference>
<dbReference type="PIRSF" id="PIRSF002133">
    <property type="entry name" value="Ribosomal_S12/S23"/>
    <property type="match status" value="1"/>
</dbReference>
<dbReference type="PRINTS" id="PR01034">
    <property type="entry name" value="RIBOSOMALS12"/>
</dbReference>
<dbReference type="SUPFAM" id="SSF50249">
    <property type="entry name" value="Nucleic acid-binding proteins"/>
    <property type="match status" value="1"/>
</dbReference>
<dbReference type="PROSITE" id="PS00055">
    <property type="entry name" value="RIBOSOMAL_S12"/>
    <property type="match status" value="1"/>
</dbReference>
<reference key="1">
    <citation type="journal article" date="2002" name="Proc. Natl. Acad. Sci. U.S.A.">
        <title>Complete genome sequence and comparative genomic analysis of an emerging human pathogen, serotype V Streptococcus agalactiae.</title>
        <authorList>
            <person name="Tettelin H."/>
            <person name="Masignani V."/>
            <person name="Cieslewicz M.J."/>
            <person name="Eisen J.A."/>
            <person name="Peterson S.N."/>
            <person name="Wessels M.R."/>
            <person name="Paulsen I.T."/>
            <person name="Nelson K.E."/>
            <person name="Margarit I."/>
            <person name="Read T.D."/>
            <person name="Madoff L.C."/>
            <person name="Wolf A.M."/>
            <person name="Beanan M.J."/>
            <person name="Brinkac L.M."/>
            <person name="Daugherty S.C."/>
            <person name="DeBoy R.T."/>
            <person name="Durkin A.S."/>
            <person name="Kolonay J.F."/>
            <person name="Madupu R."/>
            <person name="Lewis M.R."/>
            <person name="Radune D."/>
            <person name="Fedorova N.B."/>
            <person name="Scanlan D."/>
            <person name="Khouri H.M."/>
            <person name="Mulligan S."/>
            <person name="Carty H.A."/>
            <person name="Cline R.T."/>
            <person name="Van Aken S.E."/>
            <person name="Gill J."/>
            <person name="Scarselli M."/>
            <person name="Mora M."/>
            <person name="Iacobini E.T."/>
            <person name="Brettoni C."/>
            <person name="Galli G."/>
            <person name="Mariani M."/>
            <person name="Vegni F."/>
            <person name="Maione D."/>
            <person name="Rinaudo D."/>
            <person name="Rappuoli R."/>
            <person name="Telford J.L."/>
            <person name="Kasper D.L."/>
            <person name="Grandi G."/>
            <person name="Fraser C.M."/>
        </authorList>
    </citation>
    <scope>NUCLEOTIDE SEQUENCE [LARGE SCALE GENOMIC DNA]</scope>
    <source>
        <strain>ATCC BAA-611 / 2603 V/R</strain>
    </source>
</reference>
<comment type="function">
    <text evidence="2">With S4 and S5 plays an important role in translational accuracy.</text>
</comment>
<comment type="function">
    <text evidence="2">Interacts with and stabilizes bases of the 16S rRNA that are involved in tRNA selection in the A site and with the mRNA backbone. Located at the interface of the 30S and 50S subunits, it traverses the body of the 30S subunit contacting proteins on the other side and probably holding the rRNA structure together. The combined cluster of proteins S8, S12 and S17 appears to hold together the shoulder and platform of the 30S subunit.</text>
</comment>
<comment type="subunit">
    <text evidence="2">Part of the 30S ribosomal subunit. Contacts proteins S8 and S17. May interact with IF1 in the 30S initiation complex.</text>
</comment>
<comment type="similarity">
    <text evidence="2">Belongs to the universal ribosomal protein uS12 family.</text>
</comment>
<evidence type="ECO:0000250" key="1"/>
<evidence type="ECO:0000255" key="2">
    <source>
        <dbReference type="HAMAP-Rule" id="MF_00403"/>
    </source>
</evidence>
<evidence type="ECO:0000256" key="3">
    <source>
        <dbReference type="SAM" id="MobiDB-lite"/>
    </source>
</evidence>
<evidence type="ECO:0000305" key="4"/>
<gene>
    <name evidence="2" type="primary">rpsL</name>
    <name type="ordered locus">SAG1771</name>
</gene>
<feature type="chain" id="PRO_0000146318" description="Small ribosomal subunit protein uS12">
    <location>
        <begin position="1"/>
        <end position="137"/>
    </location>
</feature>
<feature type="region of interest" description="Disordered" evidence="3">
    <location>
        <begin position="1"/>
        <end position="21"/>
    </location>
</feature>
<feature type="region of interest" description="Disordered" evidence="3">
    <location>
        <begin position="36"/>
        <end position="57"/>
    </location>
</feature>
<feature type="modified residue" description="3-methylthioaspartic acid" evidence="1">
    <location>
        <position position="102"/>
    </location>
</feature>
<proteinExistence type="inferred from homology"/>
<protein>
    <recommendedName>
        <fullName evidence="2">Small ribosomal subunit protein uS12</fullName>
    </recommendedName>
    <alternativeName>
        <fullName evidence="4">30S ribosomal protein S12</fullName>
    </alternativeName>
</protein>
<sequence>MPTINQLVRKPRKSKVEKSDSPALNIGYNSHRKVHTKLSAPQKRGVATRVGTMTPKKPNSALRKFARVRLSNLIEVTAYIPGIGHNLQEHSVVLIRGGRVKDLPGVRYHIVRGALDTAGVADRKQGRSKYGAKRPKG</sequence>
<accession>Q8DXS5</accession>